<protein>
    <recommendedName>
        <fullName>Cytochrome c oxidase assembly protein COX11, mitochondrial</fullName>
    </recommendedName>
</protein>
<gene>
    <name type="primary">cox11</name>
    <name type="ORF">DDB_G0289353</name>
</gene>
<feature type="transit peptide" description="Mitochondrion" evidence="2">
    <location>
        <begin position="1"/>
        <end status="unknown"/>
    </location>
</feature>
<feature type="chain" id="PRO_0000320290" description="Cytochrome c oxidase assembly protein COX11, mitochondrial">
    <location>
        <begin status="unknown"/>
        <end position="312"/>
    </location>
</feature>
<feature type="topological domain" description="Mitochondrial matrix" evidence="2">
    <location>
        <begin status="unknown"/>
        <end position="131"/>
    </location>
</feature>
<feature type="transmembrane region" description="Helical" evidence="2">
    <location>
        <begin position="132"/>
        <end position="152"/>
    </location>
</feature>
<feature type="topological domain" description="Mitochondrial intermembrane" evidence="2">
    <location>
        <begin position="153"/>
        <end position="312"/>
    </location>
</feature>
<feature type="region of interest" description="Disordered" evidence="3">
    <location>
        <begin position="79"/>
        <end position="117"/>
    </location>
</feature>
<feature type="compositionally biased region" description="Pro residues" evidence="3">
    <location>
        <begin position="87"/>
        <end position="101"/>
    </location>
</feature>
<feature type="compositionally biased region" description="Low complexity" evidence="3">
    <location>
        <begin position="102"/>
        <end position="117"/>
    </location>
</feature>
<sequence>MSRLFNNFLLKTNKNQFIQSFSTKSQINNNIFNNLIKNEKISLPPPPFLSSSSPLSMNNIFNRNNKNLYTTNNFNYNKLQFTTQSPNPTPTPTPTPTPTPTPNNNENNNNKNNNNNNFKEEQKKILQEKNKAIGLYVLIAIIGILGLSYAAVPLYRIFCRATGYGGTTRDADDFDVIRKRNLDRTVYPIKVTFSASTANKIPWTFKPTQSTIECLPGEPVLCFYRATNNTDTPIIGVATYNITPMKAGTYFTKIQCFCFDEQRINAHETIDMPVLFVIEPELLDDKNMKGVSDITLSYTFFKSNDQGEYEEI</sequence>
<accession>Q54HM6</accession>
<name>COX11_DICDI</name>
<reference key="1">
    <citation type="journal article" date="2005" name="Nature">
        <title>The genome of the social amoeba Dictyostelium discoideum.</title>
        <authorList>
            <person name="Eichinger L."/>
            <person name="Pachebat J.A."/>
            <person name="Gloeckner G."/>
            <person name="Rajandream M.A."/>
            <person name="Sucgang R."/>
            <person name="Berriman M."/>
            <person name="Song J."/>
            <person name="Olsen R."/>
            <person name="Szafranski K."/>
            <person name="Xu Q."/>
            <person name="Tunggal B."/>
            <person name="Kummerfeld S."/>
            <person name="Madera M."/>
            <person name="Konfortov B.A."/>
            <person name="Rivero F."/>
            <person name="Bankier A.T."/>
            <person name="Lehmann R."/>
            <person name="Hamlin N."/>
            <person name="Davies R."/>
            <person name="Gaudet P."/>
            <person name="Fey P."/>
            <person name="Pilcher K."/>
            <person name="Chen G."/>
            <person name="Saunders D."/>
            <person name="Sodergren E.J."/>
            <person name="Davis P."/>
            <person name="Kerhornou A."/>
            <person name="Nie X."/>
            <person name="Hall N."/>
            <person name="Anjard C."/>
            <person name="Hemphill L."/>
            <person name="Bason N."/>
            <person name="Farbrother P."/>
            <person name="Desany B."/>
            <person name="Just E."/>
            <person name="Morio T."/>
            <person name="Rost R."/>
            <person name="Churcher C.M."/>
            <person name="Cooper J."/>
            <person name="Haydock S."/>
            <person name="van Driessche N."/>
            <person name="Cronin A."/>
            <person name="Goodhead I."/>
            <person name="Muzny D.M."/>
            <person name="Mourier T."/>
            <person name="Pain A."/>
            <person name="Lu M."/>
            <person name="Harper D."/>
            <person name="Lindsay R."/>
            <person name="Hauser H."/>
            <person name="James K.D."/>
            <person name="Quiles M."/>
            <person name="Madan Babu M."/>
            <person name="Saito T."/>
            <person name="Buchrieser C."/>
            <person name="Wardroper A."/>
            <person name="Felder M."/>
            <person name="Thangavelu M."/>
            <person name="Johnson D."/>
            <person name="Knights A."/>
            <person name="Loulseged H."/>
            <person name="Mungall K.L."/>
            <person name="Oliver K."/>
            <person name="Price C."/>
            <person name="Quail M.A."/>
            <person name="Urushihara H."/>
            <person name="Hernandez J."/>
            <person name="Rabbinowitsch E."/>
            <person name="Steffen D."/>
            <person name="Sanders M."/>
            <person name="Ma J."/>
            <person name="Kohara Y."/>
            <person name="Sharp S."/>
            <person name="Simmonds M.N."/>
            <person name="Spiegler S."/>
            <person name="Tivey A."/>
            <person name="Sugano S."/>
            <person name="White B."/>
            <person name="Walker D."/>
            <person name="Woodward J.R."/>
            <person name="Winckler T."/>
            <person name="Tanaka Y."/>
            <person name="Shaulsky G."/>
            <person name="Schleicher M."/>
            <person name="Weinstock G.M."/>
            <person name="Rosenthal A."/>
            <person name="Cox E.C."/>
            <person name="Chisholm R.L."/>
            <person name="Gibbs R.A."/>
            <person name="Loomis W.F."/>
            <person name="Platzer M."/>
            <person name="Kay R.R."/>
            <person name="Williams J.G."/>
            <person name="Dear P.H."/>
            <person name="Noegel A.A."/>
            <person name="Barrell B.G."/>
            <person name="Kuspa A."/>
        </authorList>
    </citation>
    <scope>NUCLEOTIDE SEQUENCE [LARGE SCALE GENOMIC DNA]</scope>
    <source>
        <strain>AX4</strain>
    </source>
</reference>
<comment type="function">
    <text evidence="1">Exerts its effect at some terminal stage of cytochrome c oxidase synthesis, probably by being involved in the insertion of the copper B into subunit I.</text>
</comment>
<comment type="subcellular location">
    <subcellularLocation>
        <location evidence="1">Mitochondrion inner membrane</location>
        <topology evidence="1">Single-pass membrane protein</topology>
        <orientation evidence="1">Intermembrane side</orientation>
    </subcellularLocation>
</comment>
<comment type="similarity">
    <text evidence="4">Belongs to the COX11/CtaG family.</text>
</comment>
<dbReference type="EMBL" id="AAFI02000139">
    <property type="protein sequence ID" value="EAL62763.1"/>
    <property type="molecule type" value="Genomic_DNA"/>
</dbReference>
<dbReference type="RefSeq" id="XP_636275.1">
    <property type="nucleotide sequence ID" value="XM_631183.1"/>
</dbReference>
<dbReference type="SMR" id="Q54HM6"/>
<dbReference type="FunCoup" id="Q54HM6">
    <property type="interactions" value="624"/>
</dbReference>
<dbReference type="STRING" id="44689.Q54HM6"/>
<dbReference type="GlyGen" id="Q54HM6">
    <property type="glycosylation" value="7 sites"/>
</dbReference>
<dbReference type="PaxDb" id="44689-DDB0252815"/>
<dbReference type="EnsemblProtists" id="EAL62763">
    <property type="protein sequence ID" value="EAL62763"/>
    <property type="gene ID" value="DDB_G0289353"/>
</dbReference>
<dbReference type="GeneID" id="8627093"/>
<dbReference type="KEGG" id="ddi:DDB_G0289353"/>
<dbReference type="dictyBase" id="DDB_G0289353">
    <property type="gene designation" value="cox11"/>
</dbReference>
<dbReference type="VEuPathDB" id="AmoebaDB:DDB_G0289353"/>
<dbReference type="eggNOG" id="KOG2540">
    <property type="taxonomic scope" value="Eukaryota"/>
</dbReference>
<dbReference type="HOGENOM" id="CLU_892614_0_0_1"/>
<dbReference type="InParanoid" id="Q54HM6"/>
<dbReference type="OMA" id="CQQSGYL"/>
<dbReference type="PhylomeDB" id="Q54HM6"/>
<dbReference type="PRO" id="PR:Q54HM6"/>
<dbReference type="Proteomes" id="UP000002195">
    <property type="component" value="Chromosome 5"/>
</dbReference>
<dbReference type="GO" id="GO:0005743">
    <property type="term" value="C:mitochondrial inner membrane"/>
    <property type="evidence" value="ECO:0000318"/>
    <property type="project" value="GO_Central"/>
</dbReference>
<dbReference type="GO" id="GO:0005739">
    <property type="term" value="C:mitochondrion"/>
    <property type="evidence" value="ECO:0000250"/>
    <property type="project" value="dictyBase"/>
</dbReference>
<dbReference type="GO" id="GO:0005507">
    <property type="term" value="F:copper ion binding"/>
    <property type="evidence" value="ECO:0000250"/>
    <property type="project" value="dictyBase"/>
</dbReference>
<dbReference type="GO" id="GO:0009060">
    <property type="term" value="P:aerobic respiration"/>
    <property type="evidence" value="ECO:0000250"/>
    <property type="project" value="dictyBase"/>
</dbReference>
<dbReference type="GO" id="GO:0065003">
    <property type="term" value="P:protein-containing complex assembly"/>
    <property type="evidence" value="ECO:0000250"/>
    <property type="project" value="dictyBase"/>
</dbReference>
<dbReference type="FunFam" id="2.60.370.10:FF:000001">
    <property type="entry name" value="COX11 cytochrome c oxidase assembly homolog"/>
    <property type="match status" value="1"/>
</dbReference>
<dbReference type="Gene3D" id="2.60.370.10">
    <property type="entry name" value="Ctag/Cox11"/>
    <property type="match status" value="1"/>
</dbReference>
<dbReference type="HAMAP" id="MF_00155">
    <property type="entry name" value="CtaG"/>
    <property type="match status" value="1"/>
</dbReference>
<dbReference type="InterPro" id="IPR023471">
    <property type="entry name" value="CtaG/Cox11_dom_sf"/>
</dbReference>
<dbReference type="InterPro" id="IPR007533">
    <property type="entry name" value="Cyt_c_oxidase_assmbl_CtaG"/>
</dbReference>
<dbReference type="NCBIfam" id="NF003465">
    <property type="entry name" value="PRK05089.1"/>
    <property type="match status" value="1"/>
</dbReference>
<dbReference type="PANTHER" id="PTHR21320:SF3">
    <property type="entry name" value="CYTOCHROME C OXIDASE ASSEMBLY PROTEIN COX11, MITOCHONDRIAL-RELATED"/>
    <property type="match status" value="1"/>
</dbReference>
<dbReference type="PANTHER" id="PTHR21320">
    <property type="entry name" value="CYTOCHROME C OXIDASE ASSEMBLY PROTEIN COX11-RELATED"/>
    <property type="match status" value="1"/>
</dbReference>
<dbReference type="Pfam" id="PF04442">
    <property type="entry name" value="CtaG_Cox11"/>
    <property type="match status" value="1"/>
</dbReference>
<dbReference type="SUPFAM" id="SSF110111">
    <property type="entry name" value="Ctag/Cox11"/>
    <property type="match status" value="1"/>
</dbReference>
<keyword id="KW-0186">Copper</keyword>
<keyword id="KW-0472">Membrane</keyword>
<keyword id="KW-0496">Mitochondrion</keyword>
<keyword id="KW-0999">Mitochondrion inner membrane</keyword>
<keyword id="KW-1185">Reference proteome</keyword>
<keyword id="KW-0809">Transit peptide</keyword>
<keyword id="KW-0812">Transmembrane</keyword>
<keyword id="KW-1133">Transmembrane helix</keyword>
<organism>
    <name type="scientific">Dictyostelium discoideum</name>
    <name type="common">Social amoeba</name>
    <dbReference type="NCBI Taxonomy" id="44689"/>
    <lineage>
        <taxon>Eukaryota</taxon>
        <taxon>Amoebozoa</taxon>
        <taxon>Evosea</taxon>
        <taxon>Eumycetozoa</taxon>
        <taxon>Dictyostelia</taxon>
        <taxon>Dictyosteliales</taxon>
        <taxon>Dictyosteliaceae</taxon>
        <taxon>Dictyostelium</taxon>
    </lineage>
</organism>
<proteinExistence type="inferred from homology"/>
<evidence type="ECO:0000250" key="1"/>
<evidence type="ECO:0000255" key="2"/>
<evidence type="ECO:0000256" key="3">
    <source>
        <dbReference type="SAM" id="MobiDB-lite"/>
    </source>
</evidence>
<evidence type="ECO:0000305" key="4"/>